<feature type="chain" id="PRO_0000330914" description="Activator of 90 kDa heat shock protein ATPase homolog">
    <location>
        <begin position="1"/>
        <end position="383"/>
    </location>
</feature>
<feature type="region of interest" description="Disordered" evidence="2">
    <location>
        <begin position="97"/>
        <end position="126"/>
    </location>
</feature>
<feature type="region of interest" description="Disordered" evidence="2">
    <location>
        <begin position="209"/>
        <end position="228"/>
    </location>
</feature>
<name>AHSA_DICDI</name>
<evidence type="ECO:0000250" key="1"/>
<evidence type="ECO:0000256" key="2">
    <source>
        <dbReference type="SAM" id="MobiDB-lite"/>
    </source>
</evidence>
<evidence type="ECO:0000305" key="3"/>
<comment type="function">
    <text evidence="1">Co-chaperone that stimulates hspD/HSP90 ATPase activity.</text>
</comment>
<comment type="subunit">
    <text evidence="1">Interacts with hspD/HSP90.</text>
</comment>
<comment type="subcellular location">
    <subcellularLocation>
        <location evidence="1">Cytoplasm</location>
    </subcellularLocation>
</comment>
<comment type="similarity">
    <text evidence="3">Belongs to the AHA1 family.</text>
</comment>
<dbReference type="EMBL" id="AAFI02000005">
    <property type="protein sequence ID" value="EAL72206.1"/>
    <property type="molecule type" value="Genomic_DNA"/>
</dbReference>
<dbReference type="RefSeq" id="XP_646215.1">
    <property type="nucleotide sequence ID" value="XM_641123.1"/>
</dbReference>
<dbReference type="SMR" id="Q55DB6"/>
<dbReference type="FunCoup" id="Q55DB6">
    <property type="interactions" value="985"/>
</dbReference>
<dbReference type="STRING" id="44689.Q55DB6"/>
<dbReference type="PaxDb" id="44689-DDB0266643"/>
<dbReference type="EnsemblProtists" id="EAL72206">
    <property type="protein sequence ID" value="EAL72206"/>
    <property type="gene ID" value="DDB_G0269712"/>
</dbReference>
<dbReference type="GeneID" id="8617169"/>
<dbReference type="KEGG" id="ddi:DDB_G0269712"/>
<dbReference type="dictyBase" id="DDB_G0269712">
    <property type="gene designation" value="ahsa"/>
</dbReference>
<dbReference type="VEuPathDB" id="AmoebaDB:DDB_G0269712"/>
<dbReference type="eggNOG" id="KOG2936">
    <property type="taxonomic scope" value="Eukaryota"/>
</dbReference>
<dbReference type="HOGENOM" id="CLU_049046_2_0_1"/>
<dbReference type="InParanoid" id="Q55DB6"/>
<dbReference type="OMA" id="HIAMKWR"/>
<dbReference type="PhylomeDB" id="Q55DB6"/>
<dbReference type="PRO" id="PR:Q55DB6"/>
<dbReference type="Proteomes" id="UP000002195">
    <property type="component" value="Chromosome 1"/>
</dbReference>
<dbReference type="GO" id="GO:0005829">
    <property type="term" value="C:cytosol"/>
    <property type="evidence" value="ECO:0000318"/>
    <property type="project" value="GO_Central"/>
</dbReference>
<dbReference type="GO" id="GO:0001671">
    <property type="term" value="F:ATPase activator activity"/>
    <property type="evidence" value="ECO:0000318"/>
    <property type="project" value="GO_Central"/>
</dbReference>
<dbReference type="GO" id="GO:0051087">
    <property type="term" value="F:protein-folding chaperone binding"/>
    <property type="evidence" value="ECO:0007669"/>
    <property type="project" value="InterPro"/>
</dbReference>
<dbReference type="GO" id="GO:0006457">
    <property type="term" value="P:protein folding"/>
    <property type="evidence" value="ECO:0000318"/>
    <property type="project" value="GO_Central"/>
</dbReference>
<dbReference type="CDD" id="cd08892">
    <property type="entry name" value="SRPBCC_Aha1"/>
    <property type="match status" value="1"/>
</dbReference>
<dbReference type="Gene3D" id="3.30.530.20">
    <property type="match status" value="1"/>
</dbReference>
<dbReference type="Gene3D" id="3.15.10.20">
    <property type="entry name" value="Activator of Hsp90 ATPase Aha1, N-terminal domain"/>
    <property type="match status" value="1"/>
</dbReference>
<dbReference type="InterPro" id="IPR036338">
    <property type="entry name" value="Aha1"/>
</dbReference>
<dbReference type="InterPro" id="IPR015310">
    <property type="entry name" value="AHSA1-like_N"/>
</dbReference>
<dbReference type="InterPro" id="IPR013538">
    <property type="entry name" value="ASHA1/2-like_C"/>
</dbReference>
<dbReference type="InterPro" id="IPR023393">
    <property type="entry name" value="START-like_dom_sf"/>
</dbReference>
<dbReference type="PANTHER" id="PTHR13009">
    <property type="entry name" value="HEAT SHOCK PROTEIN 90 HSP90 CO-CHAPERONE AHA-1"/>
    <property type="match status" value="1"/>
</dbReference>
<dbReference type="PANTHER" id="PTHR13009:SF22">
    <property type="entry name" value="LD43819P"/>
    <property type="match status" value="1"/>
</dbReference>
<dbReference type="Pfam" id="PF09229">
    <property type="entry name" value="Aha1_N"/>
    <property type="match status" value="1"/>
</dbReference>
<dbReference type="Pfam" id="PF08327">
    <property type="entry name" value="AHSA1"/>
    <property type="match status" value="1"/>
</dbReference>
<dbReference type="SMART" id="SM01000">
    <property type="entry name" value="Aha1_N"/>
    <property type="match status" value="1"/>
</dbReference>
<dbReference type="SUPFAM" id="SSF103111">
    <property type="entry name" value="Activator of Hsp90 ATPase, Aha1"/>
    <property type="match status" value="1"/>
</dbReference>
<dbReference type="SUPFAM" id="SSF55961">
    <property type="entry name" value="Bet v1-like"/>
    <property type="match status" value="1"/>
</dbReference>
<proteinExistence type="evidence at transcript level"/>
<accession>Q55DB6</accession>
<reference key="1">
    <citation type="journal article" date="2005" name="Nature">
        <title>The genome of the social amoeba Dictyostelium discoideum.</title>
        <authorList>
            <person name="Eichinger L."/>
            <person name="Pachebat J.A."/>
            <person name="Gloeckner G."/>
            <person name="Rajandream M.A."/>
            <person name="Sucgang R."/>
            <person name="Berriman M."/>
            <person name="Song J."/>
            <person name="Olsen R."/>
            <person name="Szafranski K."/>
            <person name="Xu Q."/>
            <person name="Tunggal B."/>
            <person name="Kummerfeld S."/>
            <person name="Madera M."/>
            <person name="Konfortov B.A."/>
            <person name="Rivero F."/>
            <person name="Bankier A.T."/>
            <person name="Lehmann R."/>
            <person name="Hamlin N."/>
            <person name="Davies R."/>
            <person name="Gaudet P."/>
            <person name="Fey P."/>
            <person name="Pilcher K."/>
            <person name="Chen G."/>
            <person name="Saunders D."/>
            <person name="Sodergren E.J."/>
            <person name="Davis P."/>
            <person name="Kerhornou A."/>
            <person name="Nie X."/>
            <person name="Hall N."/>
            <person name="Anjard C."/>
            <person name="Hemphill L."/>
            <person name="Bason N."/>
            <person name="Farbrother P."/>
            <person name="Desany B."/>
            <person name="Just E."/>
            <person name="Morio T."/>
            <person name="Rost R."/>
            <person name="Churcher C.M."/>
            <person name="Cooper J."/>
            <person name="Haydock S."/>
            <person name="van Driessche N."/>
            <person name="Cronin A."/>
            <person name="Goodhead I."/>
            <person name="Muzny D.M."/>
            <person name="Mourier T."/>
            <person name="Pain A."/>
            <person name="Lu M."/>
            <person name="Harper D."/>
            <person name="Lindsay R."/>
            <person name="Hauser H."/>
            <person name="James K.D."/>
            <person name="Quiles M."/>
            <person name="Madan Babu M."/>
            <person name="Saito T."/>
            <person name="Buchrieser C."/>
            <person name="Wardroper A."/>
            <person name="Felder M."/>
            <person name="Thangavelu M."/>
            <person name="Johnson D."/>
            <person name="Knights A."/>
            <person name="Loulseged H."/>
            <person name="Mungall K.L."/>
            <person name="Oliver K."/>
            <person name="Price C."/>
            <person name="Quail M.A."/>
            <person name="Urushihara H."/>
            <person name="Hernandez J."/>
            <person name="Rabbinowitsch E."/>
            <person name="Steffen D."/>
            <person name="Sanders M."/>
            <person name="Ma J."/>
            <person name="Kohara Y."/>
            <person name="Sharp S."/>
            <person name="Simmonds M.N."/>
            <person name="Spiegler S."/>
            <person name="Tivey A."/>
            <person name="Sugano S."/>
            <person name="White B."/>
            <person name="Walker D."/>
            <person name="Woodward J.R."/>
            <person name="Winckler T."/>
            <person name="Tanaka Y."/>
            <person name="Shaulsky G."/>
            <person name="Schleicher M."/>
            <person name="Weinstock G.M."/>
            <person name="Rosenthal A."/>
            <person name="Cox E.C."/>
            <person name="Chisholm R.L."/>
            <person name="Gibbs R.A."/>
            <person name="Loomis W.F."/>
            <person name="Platzer M."/>
            <person name="Kay R.R."/>
            <person name="Williams J.G."/>
            <person name="Dear P.H."/>
            <person name="Noegel A.A."/>
            <person name="Barrell B.G."/>
            <person name="Kuspa A."/>
        </authorList>
    </citation>
    <scope>NUCLEOTIDE SEQUENCE [LARGE SCALE GENOMIC DNA]</scope>
    <source>
        <strain>AX4</strain>
    </source>
</reference>
<protein>
    <recommendedName>
        <fullName>Activator of 90 kDa heat shock protein ATPase homolog</fullName>
    </recommendedName>
</protein>
<organism>
    <name type="scientific">Dictyostelium discoideum</name>
    <name type="common">Social amoeba</name>
    <dbReference type="NCBI Taxonomy" id="44689"/>
    <lineage>
        <taxon>Eukaryota</taxon>
        <taxon>Amoebozoa</taxon>
        <taxon>Evosea</taxon>
        <taxon>Eumycetozoa</taxon>
        <taxon>Dictyostelia</taxon>
        <taxon>Dictyosteliales</taxon>
        <taxon>Dictyosteliaceae</taxon>
        <taxon>Dictyostelium</taxon>
    </lineage>
</organism>
<sequence>MAKVGEGDPRWIVENREDGHNVNGWHWSEKDCLPWSKNTIGGLFDKKVIQETDEYTFKISSTPVVSGECTANNRKGKTIFLYELDVKMNWEVVFKPKKVLPPPPTTKSKGAADDIDEEDDDGKPAEPIITQKKTISGEFTVPYISDENGDEAPTVRYTINTTADNDETKQSINMVQSLLKSHGVPFVQSQCQEFIKLLKKEFVSKKQVEQSQQQQTANTTTNTTTTTNTVPKVTSSTVIFNSTPTKKPTTKTLKLKEEFQCSPMDAYDVFVNINKLRAFTQSDCTFENEEGGKFSLYGGSIQGVNKTLSPGSKIVQTWRLDNWSKGVESQVTITFSVDGKPLTNVEIVQTGIPIDEFEKTEEGWKRNILDRIKHTFSYSSKIF</sequence>
<gene>
    <name type="primary">ahsa</name>
    <name type="synonym">aha1</name>
    <name type="ORF">DDB_G0269712</name>
</gene>
<keyword id="KW-0143">Chaperone</keyword>
<keyword id="KW-0963">Cytoplasm</keyword>
<keyword id="KW-1185">Reference proteome</keyword>